<accession>P24690</accession>
<proteinExistence type="inferred from homology"/>
<feature type="propeptide" id="PRO_0000449558" description="Leader sequence" evidence="1">
    <location>
        <begin position="1"/>
        <end position="7"/>
    </location>
</feature>
<feature type="chain" id="PRO_0000449559" description="Type II secretion system protein K">
    <location>
        <begin position="8"/>
        <end position="354"/>
    </location>
</feature>
<feature type="transmembrane region" description="Helical" evidence="2">
    <location>
        <begin position="8"/>
        <end position="28"/>
    </location>
</feature>
<feature type="topological domain" description="Periplasmic" evidence="2">
    <location>
        <begin position="29"/>
        <end position="354"/>
    </location>
</feature>
<feature type="region of interest" description="Disordered" evidence="3">
    <location>
        <begin position="114"/>
        <end position="151"/>
    </location>
</feature>
<feature type="compositionally biased region" description="Low complexity" evidence="3">
    <location>
        <begin position="118"/>
        <end position="141"/>
    </location>
</feature>
<feature type="sequence conflict" description="In Ref. 2; AAA24829." evidence="4" ref="2">
    <location>
        <begin position="54"/>
        <end position="73"/>
    </location>
</feature>
<name>GSPK_DICCH</name>
<sequence length="354" mass="39155">MSRRQRGVALLIVMLMLSLMVTIAASITERSGKAWQRTSNLLNRTQARWYALGAEALISNVLQRDAQASPESTFIGQPWSKVDHQMMADGTEIRAQALDGQACLNLNALSPARNVTPNNASGNNTSGNNNAANGSSGNGNSPQPPKVGTSEQVPYAAQVFRQLMIVLGEDPKQAERITDALRDWLDEDSEPLMNGAEDDSYVNFHPGNQRMTDVTELRAVMGMDAALYRRLLPYVCVLPVDKLAINVNTLMPGSAPLLSALFMGDISLDMAERILQQRPPQGWRNLNDFMGMSALPESGKNGARQVLVIKSDWFFADIQIRVDDSEFYQRSLFHRGKQIEVVQRQYGGYRTVNP</sequence>
<gene>
    <name type="primary">outK</name>
</gene>
<organism>
    <name type="scientific">Dickeya chrysanthemi</name>
    <name type="common">Pectobacterium chrysanthemi</name>
    <name type="synonym">Erwinia chrysanthemi</name>
    <dbReference type="NCBI Taxonomy" id="556"/>
    <lineage>
        <taxon>Bacteria</taxon>
        <taxon>Pseudomonadati</taxon>
        <taxon>Pseudomonadota</taxon>
        <taxon>Gammaproteobacteria</taxon>
        <taxon>Enterobacterales</taxon>
        <taxon>Pectobacteriaceae</taxon>
        <taxon>Dickeya</taxon>
    </lineage>
</organism>
<reference key="1">
    <citation type="journal article" date="1992" name="J. Bacteriol.">
        <title>Analysis of eight out genes in a cluster required for pectic enzyme secretion by Erwinia chrysanthemi: sequence comparison with secretion genes from other Gram-negative bacteria.</title>
        <authorList>
            <person name="Lindeberg M."/>
            <person name="Collmer A."/>
        </authorList>
    </citation>
    <scope>NUCLEOTIDE SEQUENCE [GENOMIC DNA]</scope>
    <source>
        <strain>EC16</strain>
    </source>
</reference>
<reference key="2">
    <citation type="journal article" date="1991" name="Proc. Natl. Acad. Sci. U.S.A.">
        <title>Cloned Erwinia chrysanthemi out genes enable Escherichia coli to selectively secrete a diverse family of heterologous proteins to its milieu.</title>
        <authorList>
            <person name="He S.Y."/>
            <person name="Lindeberg M."/>
            <person name="Chatterjee A.K."/>
            <person name="Collmer A."/>
        </authorList>
    </citation>
    <scope>PRELIMINARY NUCLEOTIDE SEQUENCE [GENOMIC DNA] OF 1-324</scope>
    <source>
        <strain>EC16</strain>
    </source>
</reference>
<keyword id="KW-0997">Cell inner membrane</keyword>
<keyword id="KW-1003">Cell membrane</keyword>
<keyword id="KW-0472">Membrane</keyword>
<keyword id="KW-0653">Protein transport</keyword>
<keyword id="KW-0812">Transmembrane</keyword>
<keyword id="KW-1133">Transmembrane helix</keyword>
<keyword id="KW-0813">Transport</keyword>
<comment type="function">
    <text evidence="1">Component of the type II secretion system required for the energy-dependent secretion of extracellular factors such as proteases and toxins from the periplasm. Plays a role in pseudopilus assembly and seems to control its length. Interacts with the pseudopilus tip complex that is critical for the recognition and binding of secretion substrates.</text>
</comment>
<comment type="subunit">
    <text evidence="1">Type II secretion is composed of four main components: the outer membrane complex, the inner membrane complex, the cytoplasmic secretion ATPase and the periplasm-spanning pseudopilus. Interacts with core component OutG.</text>
</comment>
<comment type="subcellular location">
    <subcellularLocation>
        <location evidence="1">Cell inner membrane</location>
    </subcellularLocation>
</comment>
<comment type="PTM">
    <text evidence="1">Cleaved by prepilin peptidase.</text>
</comment>
<comment type="similarity">
    <text evidence="4">Belongs to the GSP K family.</text>
</comment>
<evidence type="ECO:0000250" key="1">
    <source>
        <dbReference type="UniProtKB" id="Q00518"/>
    </source>
</evidence>
<evidence type="ECO:0000255" key="2"/>
<evidence type="ECO:0000256" key="3">
    <source>
        <dbReference type="SAM" id="MobiDB-lite"/>
    </source>
</evidence>
<evidence type="ECO:0000305" key="4"/>
<protein>
    <recommendedName>
        <fullName>Type II secretion system protein K</fullName>
        <shortName>T2SS protein K</shortName>
    </recommendedName>
    <alternativeName>
        <fullName>General secretion pathway protein K</fullName>
    </alternativeName>
    <alternativeName>
        <fullName>Pectic enzymes secretion protein OutK</fullName>
    </alternativeName>
</protein>
<dbReference type="EMBL" id="L02214">
    <property type="protein sequence ID" value="AAA24838.1"/>
    <property type="molecule type" value="Genomic_DNA"/>
</dbReference>
<dbReference type="EMBL" id="M37886">
    <property type="protein sequence ID" value="AAA24829.2"/>
    <property type="molecule type" value="Genomic_DNA"/>
</dbReference>
<dbReference type="PIR" id="D37874">
    <property type="entry name" value="D37874"/>
</dbReference>
<dbReference type="PIR" id="I47021">
    <property type="entry name" value="I47021"/>
</dbReference>
<dbReference type="SMR" id="P24690"/>
<dbReference type="GO" id="GO:0005886">
    <property type="term" value="C:plasma membrane"/>
    <property type="evidence" value="ECO:0007669"/>
    <property type="project" value="UniProtKB-SubCell"/>
</dbReference>
<dbReference type="GO" id="GO:0009306">
    <property type="term" value="P:protein secretion"/>
    <property type="evidence" value="ECO:0007669"/>
    <property type="project" value="InterPro"/>
</dbReference>
<dbReference type="Gene3D" id="1.10.40.60">
    <property type="entry name" value="EpsJ-like"/>
    <property type="match status" value="2"/>
</dbReference>
<dbReference type="Gene3D" id="3.30.1300.30">
    <property type="entry name" value="GSPII I/J protein-like"/>
    <property type="match status" value="1"/>
</dbReference>
<dbReference type="InterPro" id="IPR005628">
    <property type="entry name" value="GspK"/>
</dbReference>
<dbReference type="InterPro" id="IPR038072">
    <property type="entry name" value="GspK_central_sf"/>
</dbReference>
<dbReference type="InterPro" id="IPR045584">
    <property type="entry name" value="Pilin-like"/>
</dbReference>
<dbReference type="InterPro" id="IPR049031">
    <property type="entry name" value="T2SSK_SAM-like_1st"/>
</dbReference>
<dbReference type="InterPro" id="IPR049179">
    <property type="entry name" value="T2SSK_SAM-like_2nd"/>
</dbReference>
<dbReference type="NCBIfam" id="NF037980">
    <property type="entry name" value="T2SS_GspK"/>
    <property type="match status" value="1"/>
</dbReference>
<dbReference type="PANTHER" id="PTHR38831">
    <property type="entry name" value="TYPE II SECRETION SYSTEM PROTEIN K"/>
    <property type="match status" value="1"/>
</dbReference>
<dbReference type="PANTHER" id="PTHR38831:SF1">
    <property type="entry name" value="TYPE II SECRETION SYSTEM PROTEIN K-RELATED"/>
    <property type="match status" value="1"/>
</dbReference>
<dbReference type="Pfam" id="PF03934">
    <property type="entry name" value="T2SSK"/>
    <property type="match status" value="1"/>
</dbReference>
<dbReference type="Pfam" id="PF21687">
    <property type="entry name" value="T2SSK_1st"/>
    <property type="match status" value="1"/>
</dbReference>
<dbReference type="PIRSF" id="PIRSF002786">
    <property type="entry name" value="XcpX"/>
    <property type="match status" value="1"/>
</dbReference>
<dbReference type="SUPFAM" id="SSF158544">
    <property type="entry name" value="GspK insert domain-like"/>
    <property type="match status" value="2"/>
</dbReference>
<dbReference type="SUPFAM" id="SSF54523">
    <property type="entry name" value="Pili subunits"/>
    <property type="match status" value="1"/>
</dbReference>